<keyword id="KW-0456">Lyase</keyword>
<keyword id="KW-0663">Pyridoxal phosphate</keyword>
<comment type="function">
    <text evidence="1">Catalyzes the alpha,beta-elimination reaction of D-cysteine and of several D-cysteine derivatives. It could be a defense mechanism against D-cysteine.</text>
</comment>
<comment type="catalytic activity">
    <reaction evidence="1">
        <text>D-cysteine + H2O = hydrogen sulfide + pyruvate + NH4(+) + H(+)</text>
        <dbReference type="Rhea" id="RHEA:11268"/>
        <dbReference type="ChEBI" id="CHEBI:15361"/>
        <dbReference type="ChEBI" id="CHEBI:15377"/>
        <dbReference type="ChEBI" id="CHEBI:15378"/>
        <dbReference type="ChEBI" id="CHEBI:28938"/>
        <dbReference type="ChEBI" id="CHEBI:29919"/>
        <dbReference type="ChEBI" id="CHEBI:35236"/>
        <dbReference type="EC" id="4.4.1.15"/>
    </reaction>
</comment>
<comment type="cofactor">
    <cofactor evidence="1">
        <name>pyridoxal 5'-phosphate</name>
        <dbReference type="ChEBI" id="CHEBI:597326"/>
    </cofactor>
</comment>
<comment type="subunit">
    <text evidence="1">Homodimer.</text>
</comment>
<comment type="similarity">
    <text evidence="1">Belongs to the ACC deaminase/D-cysteine desulfhydrase family.</text>
</comment>
<sequence>MSLQNLTRFPRLELIGAPTPLEYLPRLSDHLGREIFIKRDDTTPLAMGGNKLRKLEFLAADALREGADTLITAGAIQSNHVRQTAAVAAKLGLHCVALLENPIGTRAENYLSNGNRLLLDLFNTQVEMCDALTDPAAQLDELATRIEAQGYRPYVIPVGGSNALGALGYVESALEISQQCEDAVAISSVVVASGSAGTHAGLAVGLEQLMPQAELIGVTVSRSVADQLPKVVALQQAVANSLELQAKAEIILWDDYFAPGYGTPNEDGMAAVKLLAQLEGILLDPVYTGKAMAGLIDGITQKRFKDEGPILFVHTGGAPALFAYHPHL</sequence>
<organism>
    <name type="scientific">Klebsiella pneumoniae subsp. pneumoniae (strain ATCC 700721 / MGH 78578)</name>
    <dbReference type="NCBI Taxonomy" id="272620"/>
    <lineage>
        <taxon>Bacteria</taxon>
        <taxon>Pseudomonadati</taxon>
        <taxon>Pseudomonadota</taxon>
        <taxon>Gammaproteobacteria</taxon>
        <taxon>Enterobacterales</taxon>
        <taxon>Enterobacteriaceae</taxon>
        <taxon>Klebsiella/Raoultella group</taxon>
        <taxon>Klebsiella</taxon>
        <taxon>Klebsiella pneumoniae complex</taxon>
    </lineage>
</organism>
<feature type="chain" id="PRO_1000064263" description="D-cysteine desulfhydrase">
    <location>
        <begin position="1"/>
        <end position="328"/>
    </location>
</feature>
<feature type="modified residue" description="N6-(pyridoxal phosphate)lysine" evidence="1">
    <location>
        <position position="51"/>
    </location>
</feature>
<dbReference type="EC" id="4.4.1.15" evidence="1"/>
<dbReference type="EMBL" id="CP000647">
    <property type="protein sequence ID" value="ABR77840.1"/>
    <property type="molecule type" value="Genomic_DNA"/>
</dbReference>
<dbReference type="RefSeq" id="WP_004180445.1">
    <property type="nucleotide sequence ID" value="NC_009648.1"/>
</dbReference>
<dbReference type="SMR" id="A6TB69"/>
<dbReference type="STRING" id="272620.KPN_02417"/>
<dbReference type="PaxDb" id="272620-KPN_02417"/>
<dbReference type="EnsemblBacteria" id="ABR77840">
    <property type="protein sequence ID" value="ABR77840"/>
    <property type="gene ID" value="KPN_02417"/>
</dbReference>
<dbReference type="KEGG" id="kpn:KPN_02417"/>
<dbReference type="HOGENOM" id="CLU_048897_1_0_6"/>
<dbReference type="Proteomes" id="UP000000265">
    <property type="component" value="Chromosome"/>
</dbReference>
<dbReference type="GO" id="GO:0019148">
    <property type="term" value="F:D-cysteine desulfhydrase activity"/>
    <property type="evidence" value="ECO:0007669"/>
    <property type="project" value="UniProtKB-UniRule"/>
</dbReference>
<dbReference type="GO" id="GO:0046416">
    <property type="term" value="P:D-amino acid metabolic process"/>
    <property type="evidence" value="ECO:0007669"/>
    <property type="project" value="UniProtKB-UniRule"/>
</dbReference>
<dbReference type="CDD" id="cd06449">
    <property type="entry name" value="ACCD"/>
    <property type="match status" value="1"/>
</dbReference>
<dbReference type="FunFam" id="3.40.50.1100:FF:000017">
    <property type="entry name" value="D-cysteine desulfhydrase"/>
    <property type="match status" value="1"/>
</dbReference>
<dbReference type="Gene3D" id="3.40.50.1100">
    <property type="match status" value="2"/>
</dbReference>
<dbReference type="HAMAP" id="MF_01045">
    <property type="entry name" value="D_Cys_desulfhydr"/>
    <property type="match status" value="1"/>
</dbReference>
<dbReference type="InterPro" id="IPR027278">
    <property type="entry name" value="ACCD_DCysDesulf"/>
</dbReference>
<dbReference type="InterPro" id="IPR005966">
    <property type="entry name" value="D-Cys_desShydrase"/>
</dbReference>
<dbReference type="InterPro" id="IPR023702">
    <property type="entry name" value="D_Cys_desulphydr_bac"/>
</dbReference>
<dbReference type="InterPro" id="IPR001926">
    <property type="entry name" value="TrpB-like_PALP"/>
</dbReference>
<dbReference type="InterPro" id="IPR036052">
    <property type="entry name" value="TrpB-like_PALP_sf"/>
</dbReference>
<dbReference type="NCBIfam" id="TIGR01275">
    <property type="entry name" value="ACC_deam_rel"/>
    <property type="match status" value="1"/>
</dbReference>
<dbReference type="NCBIfam" id="NF003029">
    <property type="entry name" value="PRK03910.1-1"/>
    <property type="match status" value="1"/>
</dbReference>
<dbReference type="NCBIfam" id="NF003030">
    <property type="entry name" value="PRK03910.1-3"/>
    <property type="match status" value="1"/>
</dbReference>
<dbReference type="NCBIfam" id="NF003032">
    <property type="entry name" value="PRK03910.1-5"/>
    <property type="match status" value="1"/>
</dbReference>
<dbReference type="PANTHER" id="PTHR43780">
    <property type="entry name" value="1-AMINOCYCLOPROPANE-1-CARBOXYLATE DEAMINASE-RELATED"/>
    <property type="match status" value="1"/>
</dbReference>
<dbReference type="PANTHER" id="PTHR43780:SF2">
    <property type="entry name" value="1-AMINOCYCLOPROPANE-1-CARBOXYLATE DEAMINASE-RELATED"/>
    <property type="match status" value="1"/>
</dbReference>
<dbReference type="Pfam" id="PF00291">
    <property type="entry name" value="PALP"/>
    <property type="match status" value="1"/>
</dbReference>
<dbReference type="PIRSF" id="PIRSF006278">
    <property type="entry name" value="ACCD_DCysDesulf"/>
    <property type="match status" value="1"/>
</dbReference>
<dbReference type="SUPFAM" id="SSF53686">
    <property type="entry name" value="Tryptophan synthase beta subunit-like PLP-dependent enzymes"/>
    <property type="match status" value="1"/>
</dbReference>
<proteinExistence type="inferred from homology"/>
<accession>A6TB69</accession>
<protein>
    <recommendedName>
        <fullName evidence="1">D-cysteine desulfhydrase</fullName>
        <ecNumber evidence="1">4.4.1.15</ecNumber>
    </recommendedName>
</protein>
<gene>
    <name evidence="1" type="primary">dcyD</name>
    <name type="ordered locus">KPN78578_23790</name>
    <name type="ORF">KPN_02417</name>
</gene>
<evidence type="ECO:0000255" key="1">
    <source>
        <dbReference type="HAMAP-Rule" id="MF_01045"/>
    </source>
</evidence>
<reference key="1">
    <citation type="submission" date="2006-09" db="EMBL/GenBank/DDBJ databases">
        <authorList>
            <consortium name="The Klebsiella pneumonia Genome Sequencing Project"/>
            <person name="McClelland M."/>
            <person name="Sanderson E.K."/>
            <person name="Spieth J."/>
            <person name="Clifton W.S."/>
            <person name="Latreille P."/>
            <person name="Sabo A."/>
            <person name="Pepin K."/>
            <person name="Bhonagiri V."/>
            <person name="Porwollik S."/>
            <person name="Ali J."/>
            <person name="Wilson R.K."/>
        </authorList>
    </citation>
    <scope>NUCLEOTIDE SEQUENCE [LARGE SCALE GENOMIC DNA]</scope>
    <source>
        <strain>ATCC 700721 / MGH 78578</strain>
    </source>
</reference>
<name>DCYD_KLEP7</name>